<gene>
    <name type="primary">glpD</name>
    <name type="ordered locus">SSP1459</name>
</gene>
<evidence type="ECO:0000250" key="1"/>
<evidence type="ECO:0000255" key="2"/>
<evidence type="ECO:0000305" key="3"/>
<comment type="catalytic activity">
    <reaction>
        <text>a quinone + sn-glycerol 3-phosphate = dihydroxyacetone phosphate + a quinol</text>
        <dbReference type="Rhea" id="RHEA:18977"/>
        <dbReference type="ChEBI" id="CHEBI:24646"/>
        <dbReference type="ChEBI" id="CHEBI:57597"/>
        <dbReference type="ChEBI" id="CHEBI:57642"/>
        <dbReference type="ChEBI" id="CHEBI:132124"/>
        <dbReference type="EC" id="1.1.5.3"/>
    </reaction>
</comment>
<comment type="cofactor">
    <cofactor evidence="1">
        <name>FAD</name>
        <dbReference type="ChEBI" id="CHEBI:57692"/>
    </cofactor>
</comment>
<comment type="pathway">
    <text>Polyol metabolism; glycerol degradation via glycerol kinase pathway; glycerone phosphate from sn-glycerol 3-phosphate (aerobic route): step 1/1.</text>
</comment>
<comment type="subcellular location">
    <subcellularLocation>
        <location evidence="1">Cytoplasm</location>
    </subcellularLocation>
</comment>
<comment type="similarity">
    <text evidence="3">Belongs to the FAD-dependent glycerol-3-phosphate dehydrogenase family.</text>
</comment>
<dbReference type="EC" id="1.1.5.3"/>
<dbReference type="EMBL" id="AP008934">
    <property type="protein sequence ID" value="BAE18604.1"/>
    <property type="molecule type" value="Genomic_DNA"/>
</dbReference>
<dbReference type="RefSeq" id="WP_011303227.1">
    <property type="nucleotide sequence ID" value="NZ_MTGA01000034.1"/>
</dbReference>
<dbReference type="SMR" id="Q49X94"/>
<dbReference type="GeneID" id="3615086"/>
<dbReference type="KEGG" id="ssp:SSP1459"/>
<dbReference type="PATRIC" id="fig|342451.11.peg.1463"/>
<dbReference type="eggNOG" id="COG0578">
    <property type="taxonomic scope" value="Bacteria"/>
</dbReference>
<dbReference type="HOGENOM" id="CLU_015740_5_2_9"/>
<dbReference type="OrthoDB" id="9766796at2"/>
<dbReference type="UniPathway" id="UPA00618">
    <property type="reaction ID" value="UER00674"/>
</dbReference>
<dbReference type="Proteomes" id="UP000006371">
    <property type="component" value="Chromosome"/>
</dbReference>
<dbReference type="GO" id="GO:0005737">
    <property type="term" value="C:cytoplasm"/>
    <property type="evidence" value="ECO:0007669"/>
    <property type="project" value="UniProtKB-SubCell"/>
</dbReference>
<dbReference type="GO" id="GO:0004368">
    <property type="term" value="F:glycerol-3-phosphate dehydrogenase (quinone) activity"/>
    <property type="evidence" value="ECO:0007669"/>
    <property type="project" value="UniProtKB-EC"/>
</dbReference>
<dbReference type="GO" id="GO:0019563">
    <property type="term" value="P:glycerol catabolic process"/>
    <property type="evidence" value="ECO:0007669"/>
    <property type="project" value="UniProtKB-UniPathway"/>
</dbReference>
<dbReference type="GO" id="GO:0046168">
    <property type="term" value="P:glycerol-3-phosphate catabolic process"/>
    <property type="evidence" value="ECO:0007669"/>
    <property type="project" value="TreeGrafter"/>
</dbReference>
<dbReference type="Gene3D" id="1.10.8.870">
    <property type="entry name" value="Alpha-glycerophosphate oxidase, cap domain"/>
    <property type="match status" value="1"/>
</dbReference>
<dbReference type="Gene3D" id="3.30.9.10">
    <property type="entry name" value="D-Amino Acid Oxidase, subunit A, domain 2"/>
    <property type="match status" value="1"/>
</dbReference>
<dbReference type="Gene3D" id="3.50.50.60">
    <property type="entry name" value="FAD/NAD(P)-binding domain"/>
    <property type="match status" value="1"/>
</dbReference>
<dbReference type="InterPro" id="IPR031656">
    <property type="entry name" value="DAO_C"/>
</dbReference>
<dbReference type="InterPro" id="IPR038299">
    <property type="entry name" value="DAO_C_sf"/>
</dbReference>
<dbReference type="InterPro" id="IPR006076">
    <property type="entry name" value="FAD-dep_OxRdtase"/>
</dbReference>
<dbReference type="InterPro" id="IPR036188">
    <property type="entry name" value="FAD/NAD-bd_sf"/>
</dbReference>
<dbReference type="InterPro" id="IPR000447">
    <property type="entry name" value="G3P_DH_FAD-dep"/>
</dbReference>
<dbReference type="PANTHER" id="PTHR11985:SF35">
    <property type="entry name" value="ANAEROBIC GLYCEROL-3-PHOSPHATE DEHYDROGENASE SUBUNIT A"/>
    <property type="match status" value="1"/>
</dbReference>
<dbReference type="PANTHER" id="PTHR11985">
    <property type="entry name" value="GLYCEROL-3-PHOSPHATE DEHYDROGENASE"/>
    <property type="match status" value="1"/>
</dbReference>
<dbReference type="Pfam" id="PF01266">
    <property type="entry name" value="DAO"/>
    <property type="match status" value="1"/>
</dbReference>
<dbReference type="Pfam" id="PF16901">
    <property type="entry name" value="DAO_C"/>
    <property type="match status" value="1"/>
</dbReference>
<dbReference type="PRINTS" id="PR01001">
    <property type="entry name" value="FADG3PDH"/>
</dbReference>
<dbReference type="SUPFAM" id="SSF54373">
    <property type="entry name" value="FAD-linked reductases, C-terminal domain"/>
    <property type="match status" value="1"/>
</dbReference>
<dbReference type="SUPFAM" id="SSF51905">
    <property type="entry name" value="FAD/NAD(P)-binding domain"/>
    <property type="match status" value="1"/>
</dbReference>
<dbReference type="PROSITE" id="PS00977">
    <property type="entry name" value="FAD_G3PDH_1"/>
    <property type="match status" value="1"/>
</dbReference>
<dbReference type="PROSITE" id="PS00978">
    <property type="entry name" value="FAD_G3PDH_2"/>
    <property type="match status" value="1"/>
</dbReference>
<organism>
    <name type="scientific">Staphylococcus saprophyticus subsp. saprophyticus (strain ATCC 15305 / DSM 20229 / NCIMB 8711 / NCTC 7292 / S-41)</name>
    <dbReference type="NCBI Taxonomy" id="342451"/>
    <lineage>
        <taxon>Bacteria</taxon>
        <taxon>Bacillati</taxon>
        <taxon>Bacillota</taxon>
        <taxon>Bacilli</taxon>
        <taxon>Bacillales</taxon>
        <taxon>Staphylococcaceae</taxon>
        <taxon>Staphylococcus</taxon>
    </lineage>
</organism>
<sequence length="557" mass="62260">MSLSTLKREQIKKDLKDQEFDVVIIGGGITGAGIALDASERGMKVALVEMQDFAQGTSSRSTKLVHGGLRYLKQLQVGVVAETGRERAIVYENGPHVTTPERMLLPMHKGGSMGKFTTSIGLAMYDRLAGVKKAERKTMLNAKETLEKEPLVKKAGLKGGGSYVEYRTDDARLTIEVMKRAEEKGAKVINHTKSVHFTYDSNEKVNGIQVEDQISNETYPIKAKKVINASGPWVDEVRSGDYARNNKQLRLTKGVHIVIDQSKFPLGQAVYFDTEKDGRMIFAIPREGKAYVGTTDTFYDNNKTSPLANQEDRDYLIDAINYMFPDVNVADEDIESSWAGVRPLILEEGKDPSEISRKDEVWEGKSGLLTIAGGKLTGYRHMALEIVDLLSKRLKSEFGLKFDKCATKHLTISGGDVGGSANFDKFIEQKVEEAKSYQIDESTARHFASKYGSNAEELFKIAQTAQYQETGLPLDIYTELVYSIQNEMVYRPTDFFIRRTGKLYFKIDDVLNYKEQVIDVMAGLLGYTNIEKEAYTKELQIAIDEAQTGNHQPAVKE</sequence>
<accession>Q49X94</accession>
<name>GLPD_STAS1</name>
<keyword id="KW-0963">Cytoplasm</keyword>
<keyword id="KW-0274">FAD</keyword>
<keyword id="KW-0285">Flavoprotein</keyword>
<keyword id="KW-0319">Glycerol metabolism</keyword>
<keyword id="KW-0560">Oxidoreductase</keyword>
<keyword id="KW-1185">Reference proteome</keyword>
<feature type="chain" id="PRO_0000270068" description="Aerobic glycerol-3-phosphate dehydrogenase">
    <location>
        <begin position="1"/>
        <end position="557"/>
    </location>
</feature>
<feature type="binding site" evidence="2">
    <location>
        <begin position="21"/>
        <end position="49"/>
    </location>
    <ligand>
        <name>FAD</name>
        <dbReference type="ChEBI" id="CHEBI:57692"/>
    </ligand>
</feature>
<proteinExistence type="inferred from homology"/>
<reference key="1">
    <citation type="journal article" date="2005" name="Proc. Natl. Acad. Sci. U.S.A.">
        <title>Whole genome sequence of Staphylococcus saprophyticus reveals the pathogenesis of uncomplicated urinary tract infection.</title>
        <authorList>
            <person name="Kuroda M."/>
            <person name="Yamashita A."/>
            <person name="Hirakawa H."/>
            <person name="Kumano M."/>
            <person name="Morikawa K."/>
            <person name="Higashide M."/>
            <person name="Maruyama A."/>
            <person name="Inose Y."/>
            <person name="Matoba K."/>
            <person name="Toh H."/>
            <person name="Kuhara S."/>
            <person name="Hattori M."/>
            <person name="Ohta T."/>
        </authorList>
    </citation>
    <scope>NUCLEOTIDE SEQUENCE [LARGE SCALE GENOMIC DNA]</scope>
    <source>
        <strain>ATCC 15305 / DSM 20229 / NCIMB 8711 / NCTC 7292 / S-41</strain>
    </source>
</reference>
<protein>
    <recommendedName>
        <fullName>Aerobic glycerol-3-phosphate dehydrogenase</fullName>
        <ecNumber>1.1.5.3</ecNumber>
    </recommendedName>
</protein>